<dbReference type="EMBL" id="LT708304">
    <property type="protein sequence ID" value="SIT99577.1"/>
    <property type="molecule type" value="Genomic_DNA"/>
</dbReference>
<dbReference type="RefSeq" id="NP_854636.1">
    <property type="nucleotide sequence ID" value="NC_002945.3"/>
</dbReference>
<dbReference type="RefSeq" id="WP_003404875.1">
    <property type="nucleotide sequence ID" value="NC_002945.4"/>
</dbReference>
<dbReference type="KEGG" id="mbo:BQ2027_MB0979"/>
<dbReference type="PATRIC" id="fig|233413.5.peg.1066"/>
<dbReference type="Proteomes" id="UP000001419">
    <property type="component" value="Chromosome"/>
</dbReference>
<dbReference type="GO" id="GO:0005886">
    <property type="term" value="C:plasma membrane"/>
    <property type="evidence" value="ECO:0007669"/>
    <property type="project" value="UniProtKB-SubCell"/>
</dbReference>
<dbReference type="InterPro" id="IPR035166">
    <property type="entry name" value="DUF5336"/>
</dbReference>
<dbReference type="Pfam" id="PF17270">
    <property type="entry name" value="DUF5336"/>
    <property type="match status" value="1"/>
</dbReference>
<keyword id="KW-1003">Cell membrane</keyword>
<keyword id="KW-0472">Membrane</keyword>
<keyword id="KW-1185">Reference proteome</keyword>
<keyword id="KW-0812">Transmembrane</keyword>
<keyword id="KW-1133">Transmembrane helix</keyword>
<comment type="subcellular location">
    <subcellularLocation>
        <location evidence="3">Cell membrane</location>
        <topology evidence="3">Multi-pass membrane protein</topology>
    </subcellularLocation>
</comment>
<comment type="similarity">
    <text evidence="3">To M.paratuberculosis 34 kDa antigenic protein.</text>
</comment>
<protein>
    <recommendedName>
        <fullName>34 kDa antigenic protein homolog</fullName>
    </recommendedName>
</protein>
<name>34KD_MYCBO</name>
<organism>
    <name type="scientific">Mycobacterium bovis (strain ATCC BAA-935 / AF2122/97)</name>
    <dbReference type="NCBI Taxonomy" id="233413"/>
    <lineage>
        <taxon>Bacteria</taxon>
        <taxon>Bacillati</taxon>
        <taxon>Actinomycetota</taxon>
        <taxon>Actinomycetes</taxon>
        <taxon>Mycobacteriales</taxon>
        <taxon>Mycobacteriaceae</taxon>
        <taxon>Mycobacterium</taxon>
        <taxon>Mycobacterium tuberculosis complex</taxon>
    </lineage>
</organism>
<feature type="chain" id="PRO_0000064362" description="34 kDa antigenic protein homolog">
    <location>
        <begin position="1"/>
        <end position="303"/>
    </location>
</feature>
<feature type="transmembrane region" description="Helical" evidence="1">
    <location>
        <begin position="42"/>
        <end position="62"/>
    </location>
</feature>
<feature type="transmembrane region" description="Helical" evidence="1">
    <location>
        <begin position="77"/>
        <end position="97"/>
    </location>
</feature>
<feature type="transmembrane region" description="Helical" evidence="1">
    <location>
        <begin position="102"/>
        <end position="122"/>
    </location>
</feature>
<feature type="transmembrane region" description="Helical" evidence="1">
    <location>
        <begin position="134"/>
        <end position="154"/>
    </location>
</feature>
<feature type="region of interest" description="Disordered" evidence="2">
    <location>
        <begin position="194"/>
        <end position="303"/>
    </location>
</feature>
<feature type="compositionally biased region" description="Low complexity" evidence="2">
    <location>
        <begin position="194"/>
        <end position="207"/>
    </location>
</feature>
<feature type="compositionally biased region" description="Low complexity" evidence="2">
    <location>
        <begin position="215"/>
        <end position="255"/>
    </location>
</feature>
<feature type="compositionally biased region" description="Pro residues" evidence="2">
    <location>
        <begin position="256"/>
        <end position="271"/>
    </location>
</feature>
<feature type="compositionally biased region" description="Polar residues" evidence="2">
    <location>
        <begin position="274"/>
        <end position="286"/>
    </location>
</feature>
<feature type="compositionally biased region" description="Low complexity" evidence="2">
    <location>
        <begin position="287"/>
        <end position="303"/>
    </location>
</feature>
<evidence type="ECO:0000255" key="1"/>
<evidence type="ECO:0000256" key="2">
    <source>
        <dbReference type="SAM" id="MobiDB-lite"/>
    </source>
</evidence>
<evidence type="ECO:0000305" key="3"/>
<sequence>MTYSPGNPGYPQAQPAGSYGGVTPSFAHADEGASKLPMYLNIAVAVLGLAAYFASFGPMFTLSTELGGGDGAVSGDTGLPVGVALLAALLAGVALVPKAKSHVTVVAVLGVLGVFLMVSATFNKPSAYSTGWALWVVLAFIVFQAVAAVLALLVETGAITAPAPRPKFDPYGQYGRYGQYGQYGVQPGGYYGQQGAQQAAGLQSPGPQQSPQPPGYGSQYGGYSSSPSQSGSGYTAQPPAQPPAQSGSQQSHQGPSTPPTGFPSFSPPPPVSAGTGSQAGSAPVNYSNPSGGEQSSSPGGAPV</sequence>
<reference key="1">
    <citation type="journal article" date="2003" name="Proc. Natl. Acad. Sci. U.S.A.">
        <title>The complete genome sequence of Mycobacterium bovis.</title>
        <authorList>
            <person name="Garnier T."/>
            <person name="Eiglmeier K."/>
            <person name="Camus J.-C."/>
            <person name="Medina N."/>
            <person name="Mansoor H."/>
            <person name="Pryor M."/>
            <person name="Duthoy S."/>
            <person name="Grondin S."/>
            <person name="Lacroix C."/>
            <person name="Monsempe C."/>
            <person name="Simon S."/>
            <person name="Harris B."/>
            <person name="Atkin R."/>
            <person name="Doggett J."/>
            <person name="Mayes R."/>
            <person name="Keating L."/>
            <person name="Wheeler P.R."/>
            <person name="Parkhill J."/>
            <person name="Barrell B.G."/>
            <person name="Cole S.T."/>
            <person name="Gordon S.V."/>
            <person name="Hewinson R.G."/>
        </authorList>
    </citation>
    <scope>NUCLEOTIDE SEQUENCE [LARGE SCALE GENOMIC DNA]</scope>
    <source>
        <strain>ATCC BAA-935 / AF2122/97</strain>
    </source>
</reference>
<reference key="2">
    <citation type="journal article" date="2017" name="Genome Announc.">
        <title>Updated reference genome sequence and annotation of Mycobacterium bovis AF2122/97.</title>
        <authorList>
            <person name="Malone K.M."/>
            <person name="Farrell D."/>
            <person name="Stuber T.P."/>
            <person name="Schubert O.T."/>
            <person name="Aebersold R."/>
            <person name="Robbe-Austerman S."/>
            <person name="Gordon S.V."/>
        </authorList>
    </citation>
    <scope>NUCLEOTIDE SEQUENCE [LARGE SCALE GENOMIC DNA]</scope>
    <scope>GENOME REANNOTATION</scope>
    <source>
        <strain>ATCC BAA-935 / AF2122/97</strain>
    </source>
</reference>
<proteinExistence type="predicted"/>
<accession>P65638</accession>
<accession>A0A1R3XWX9</accession>
<accession>P71556</accession>
<accession>X2BGJ1</accession>
<gene>
    <name type="ordered locus">BQ2027_MB0979</name>
</gene>